<evidence type="ECO:0000255" key="1">
    <source>
        <dbReference type="HAMAP-Rule" id="MF_00158"/>
    </source>
</evidence>
<proteinExistence type="inferred from homology"/>
<name>PANC_SALEP</name>
<feature type="chain" id="PRO_1000097100" description="Pantothenate synthetase">
    <location>
        <begin position="1"/>
        <end position="284"/>
    </location>
</feature>
<feature type="active site" description="Proton donor" evidence="1">
    <location>
        <position position="37"/>
    </location>
</feature>
<feature type="binding site" evidence="1">
    <location>
        <begin position="30"/>
        <end position="37"/>
    </location>
    <ligand>
        <name>ATP</name>
        <dbReference type="ChEBI" id="CHEBI:30616"/>
    </ligand>
</feature>
<feature type="binding site" evidence="1">
    <location>
        <position position="61"/>
    </location>
    <ligand>
        <name>(R)-pantoate</name>
        <dbReference type="ChEBI" id="CHEBI:15980"/>
    </ligand>
</feature>
<feature type="binding site" evidence="1">
    <location>
        <position position="61"/>
    </location>
    <ligand>
        <name>beta-alanine</name>
        <dbReference type="ChEBI" id="CHEBI:57966"/>
    </ligand>
</feature>
<feature type="binding site" evidence="1">
    <location>
        <begin position="149"/>
        <end position="152"/>
    </location>
    <ligand>
        <name>ATP</name>
        <dbReference type="ChEBI" id="CHEBI:30616"/>
    </ligand>
</feature>
<feature type="binding site" evidence="1">
    <location>
        <position position="155"/>
    </location>
    <ligand>
        <name>(R)-pantoate</name>
        <dbReference type="ChEBI" id="CHEBI:15980"/>
    </ligand>
</feature>
<feature type="binding site" evidence="1">
    <location>
        <position position="178"/>
    </location>
    <ligand>
        <name>ATP</name>
        <dbReference type="ChEBI" id="CHEBI:30616"/>
    </ligand>
</feature>
<feature type="binding site" evidence="1">
    <location>
        <begin position="186"/>
        <end position="189"/>
    </location>
    <ligand>
        <name>ATP</name>
        <dbReference type="ChEBI" id="CHEBI:30616"/>
    </ligand>
</feature>
<accession>B5R3E5</accession>
<comment type="function">
    <text evidence="1">Catalyzes the condensation of pantoate with beta-alanine in an ATP-dependent reaction via a pantoyl-adenylate intermediate.</text>
</comment>
<comment type="catalytic activity">
    <reaction evidence="1">
        <text>(R)-pantoate + beta-alanine + ATP = (R)-pantothenate + AMP + diphosphate + H(+)</text>
        <dbReference type="Rhea" id="RHEA:10912"/>
        <dbReference type="ChEBI" id="CHEBI:15378"/>
        <dbReference type="ChEBI" id="CHEBI:15980"/>
        <dbReference type="ChEBI" id="CHEBI:29032"/>
        <dbReference type="ChEBI" id="CHEBI:30616"/>
        <dbReference type="ChEBI" id="CHEBI:33019"/>
        <dbReference type="ChEBI" id="CHEBI:57966"/>
        <dbReference type="ChEBI" id="CHEBI:456215"/>
        <dbReference type="EC" id="6.3.2.1"/>
    </reaction>
</comment>
<comment type="pathway">
    <text evidence="1">Cofactor biosynthesis; (R)-pantothenate biosynthesis; (R)-pantothenate from (R)-pantoate and beta-alanine: step 1/1.</text>
</comment>
<comment type="subunit">
    <text evidence="1">Homodimer.</text>
</comment>
<comment type="subcellular location">
    <subcellularLocation>
        <location evidence="1">Cytoplasm</location>
    </subcellularLocation>
</comment>
<comment type="miscellaneous">
    <text evidence="1">The reaction proceeds by a bi uni uni bi ping pong mechanism.</text>
</comment>
<comment type="similarity">
    <text evidence="1">Belongs to the pantothenate synthetase family.</text>
</comment>
<sequence>MLIIETLPLLRQHIRRLRQEGKRVALVPTMGNLHDGHMKLVDEAKARADVVIVSIFVNPMQFDRPDDLVRYPRTLQEDCEKLNKRKVDYVFAPAVEEIYPQGLEGQTYVDVPGLSTMLEGASRPGHFRGVSTIVSKLFNLIQPDIACFGEKDFQQLALIRKMVADMSYDIEIVGVPIIRAKDGLALSSRNAYLTAEQRKIAPGLYNVMNSIAEKLIAGNRELQEIIAIAEQELNEKGFRADDIQIRDADTLQELTETSKRAVILAAAWLGQARLIDNQSVTLAQ</sequence>
<dbReference type="EC" id="6.3.2.1" evidence="1"/>
<dbReference type="EMBL" id="AM933172">
    <property type="protein sequence ID" value="CAR31774.1"/>
    <property type="molecule type" value="Genomic_DNA"/>
</dbReference>
<dbReference type="RefSeq" id="WP_000905348.1">
    <property type="nucleotide sequence ID" value="NC_011294.1"/>
</dbReference>
<dbReference type="SMR" id="B5R3E5"/>
<dbReference type="KEGG" id="set:SEN0186"/>
<dbReference type="HOGENOM" id="CLU_047148_0_0_6"/>
<dbReference type="UniPathway" id="UPA00028">
    <property type="reaction ID" value="UER00005"/>
</dbReference>
<dbReference type="Proteomes" id="UP000000613">
    <property type="component" value="Chromosome"/>
</dbReference>
<dbReference type="GO" id="GO:0005829">
    <property type="term" value="C:cytosol"/>
    <property type="evidence" value="ECO:0007669"/>
    <property type="project" value="TreeGrafter"/>
</dbReference>
<dbReference type="GO" id="GO:0005524">
    <property type="term" value="F:ATP binding"/>
    <property type="evidence" value="ECO:0007669"/>
    <property type="project" value="UniProtKB-KW"/>
</dbReference>
<dbReference type="GO" id="GO:0004592">
    <property type="term" value="F:pantoate-beta-alanine ligase activity"/>
    <property type="evidence" value="ECO:0007669"/>
    <property type="project" value="UniProtKB-UniRule"/>
</dbReference>
<dbReference type="GO" id="GO:0015940">
    <property type="term" value="P:pantothenate biosynthetic process"/>
    <property type="evidence" value="ECO:0007669"/>
    <property type="project" value="UniProtKB-UniRule"/>
</dbReference>
<dbReference type="CDD" id="cd00560">
    <property type="entry name" value="PanC"/>
    <property type="match status" value="1"/>
</dbReference>
<dbReference type="FunFam" id="3.30.1300.10:FF:000001">
    <property type="entry name" value="Pantothenate synthetase"/>
    <property type="match status" value="1"/>
</dbReference>
<dbReference type="FunFam" id="3.40.50.620:FF:000013">
    <property type="entry name" value="Pantothenate synthetase"/>
    <property type="match status" value="1"/>
</dbReference>
<dbReference type="Gene3D" id="3.40.50.620">
    <property type="entry name" value="HUPs"/>
    <property type="match status" value="1"/>
</dbReference>
<dbReference type="Gene3D" id="3.30.1300.10">
    <property type="entry name" value="Pantoate-beta-alanine ligase, C-terminal domain"/>
    <property type="match status" value="1"/>
</dbReference>
<dbReference type="HAMAP" id="MF_00158">
    <property type="entry name" value="PanC"/>
    <property type="match status" value="1"/>
</dbReference>
<dbReference type="InterPro" id="IPR004821">
    <property type="entry name" value="Cyt_trans-like"/>
</dbReference>
<dbReference type="InterPro" id="IPR003721">
    <property type="entry name" value="Pantoate_ligase"/>
</dbReference>
<dbReference type="InterPro" id="IPR042176">
    <property type="entry name" value="Pantoate_ligase_C"/>
</dbReference>
<dbReference type="InterPro" id="IPR014729">
    <property type="entry name" value="Rossmann-like_a/b/a_fold"/>
</dbReference>
<dbReference type="NCBIfam" id="TIGR00125">
    <property type="entry name" value="cyt_tran_rel"/>
    <property type="match status" value="1"/>
</dbReference>
<dbReference type="NCBIfam" id="TIGR00018">
    <property type="entry name" value="panC"/>
    <property type="match status" value="1"/>
</dbReference>
<dbReference type="PANTHER" id="PTHR21299">
    <property type="entry name" value="CYTIDYLATE KINASE/PANTOATE-BETA-ALANINE LIGASE"/>
    <property type="match status" value="1"/>
</dbReference>
<dbReference type="PANTHER" id="PTHR21299:SF1">
    <property type="entry name" value="PANTOATE--BETA-ALANINE LIGASE"/>
    <property type="match status" value="1"/>
</dbReference>
<dbReference type="Pfam" id="PF02569">
    <property type="entry name" value="Pantoate_ligase"/>
    <property type="match status" value="1"/>
</dbReference>
<dbReference type="SUPFAM" id="SSF52374">
    <property type="entry name" value="Nucleotidylyl transferase"/>
    <property type="match status" value="1"/>
</dbReference>
<gene>
    <name evidence="1" type="primary">panC</name>
    <name type="ordered locus">SEN0186</name>
</gene>
<keyword id="KW-0067">ATP-binding</keyword>
<keyword id="KW-0963">Cytoplasm</keyword>
<keyword id="KW-0436">Ligase</keyword>
<keyword id="KW-0547">Nucleotide-binding</keyword>
<keyword id="KW-0566">Pantothenate biosynthesis</keyword>
<protein>
    <recommendedName>
        <fullName evidence="1">Pantothenate synthetase</fullName>
        <shortName evidence="1">PS</shortName>
        <ecNumber evidence="1">6.3.2.1</ecNumber>
    </recommendedName>
    <alternativeName>
        <fullName evidence="1">Pantoate--beta-alanine ligase</fullName>
    </alternativeName>
    <alternativeName>
        <fullName evidence="1">Pantoate-activating enzyme</fullName>
    </alternativeName>
</protein>
<organism>
    <name type="scientific">Salmonella enteritidis PT4 (strain P125109)</name>
    <dbReference type="NCBI Taxonomy" id="550537"/>
    <lineage>
        <taxon>Bacteria</taxon>
        <taxon>Pseudomonadati</taxon>
        <taxon>Pseudomonadota</taxon>
        <taxon>Gammaproteobacteria</taxon>
        <taxon>Enterobacterales</taxon>
        <taxon>Enterobacteriaceae</taxon>
        <taxon>Salmonella</taxon>
    </lineage>
</organism>
<reference key="1">
    <citation type="journal article" date="2008" name="Genome Res.">
        <title>Comparative genome analysis of Salmonella enteritidis PT4 and Salmonella gallinarum 287/91 provides insights into evolutionary and host adaptation pathways.</title>
        <authorList>
            <person name="Thomson N.R."/>
            <person name="Clayton D.J."/>
            <person name="Windhorst D."/>
            <person name="Vernikos G."/>
            <person name="Davidson S."/>
            <person name="Churcher C."/>
            <person name="Quail M.A."/>
            <person name="Stevens M."/>
            <person name="Jones M.A."/>
            <person name="Watson M."/>
            <person name="Barron A."/>
            <person name="Layton A."/>
            <person name="Pickard D."/>
            <person name="Kingsley R.A."/>
            <person name="Bignell A."/>
            <person name="Clark L."/>
            <person name="Harris B."/>
            <person name="Ormond D."/>
            <person name="Abdellah Z."/>
            <person name="Brooks K."/>
            <person name="Cherevach I."/>
            <person name="Chillingworth T."/>
            <person name="Woodward J."/>
            <person name="Norberczak H."/>
            <person name="Lord A."/>
            <person name="Arrowsmith C."/>
            <person name="Jagels K."/>
            <person name="Moule S."/>
            <person name="Mungall K."/>
            <person name="Saunders M."/>
            <person name="Whitehead S."/>
            <person name="Chabalgoity J.A."/>
            <person name="Maskell D."/>
            <person name="Humphreys T."/>
            <person name="Roberts M."/>
            <person name="Barrow P.A."/>
            <person name="Dougan G."/>
            <person name="Parkhill J."/>
        </authorList>
    </citation>
    <scope>NUCLEOTIDE SEQUENCE [LARGE SCALE GENOMIC DNA]</scope>
    <source>
        <strain>P125109</strain>
    </source>
</reference>